<reference key="1">
    <citation type="journal article" date="2011" name="Nat. Genet.">
        <title>The Arabidopsis lyrata genome sequence and the basis of rapid genome size change.</title>
        <authorList>
            <person name="Hu T.T."/>
            <person name="Pattyn P."/>
            <person name="Bakker E.G."/>
            <person name="Cao J."/>
            <person name="Cheng J.-F."/>
            <person name="Clark R.M."/>
            <person name="Fahlgren N."/>
            <person name="Fawcett J.A."/>
            <person name="Grimwood J."/>
            <person name="Gundlach H."/>
            <person name="Haberer G."/>
            <person name="Hollister J.D."/>
            <person name="Ossowski S."/>
            <person name="Ottilar R.P."/>
            <person name="Salamov A.A."/>
            <person name="Schneeberger K."/>
            <person name="Spannagl M."/>
            <person name="Wang X."/>
            <person name="Yang L."/>
            <person name="Nasrallah M.E."/>
            <person name="Bergelson J."/>
            <person name="Carrington J.C."/>
            <person name="Gaut B.S."/>
            <person name="Schmutz J."/>
            <person name="Mayer K.F.X."/>
            <person name="Van de Peer Y."/>
            <person name="Grigoriev I.V."/>
            <person name="Nordborg M."/>
            <person name="Weigel D."/>
            <person name="Guo Y.-L."/>
        </authorList>
    </citation>
    <scope>NUCLEOTIDE SEQUENCE [LARGE SCALE GENOMIC DNA]</scope>
    <source>
        <strain>cv. MN47</strain>
    </source>
</reference>
<reference key="2">
    <citation type="journal article" date="2014" name="Plant Physiol.">
        <title>Functional and evolutionary analysis of the CASPARIAN STRIP MEMBRANE DOMAIN PROTEIN family.</title>
        <authorList>
            <person name="Roppolo D."/>
            <person name="Boeckmann B."/>
            <person name="Pfister A."/>
            <person name="Boutet E."/>
            <person name="Rubio M.C."/>
            <person name="Denervaud-Tendon V."/>
            <person name="Vermeer J.E."/>
            <person name="Gheyselinck J."/>
            <person name="Xenarios I."/>
            <person name="Geldner N."/>
        </authorList>
    </citation>
    <scope>GENE FAMILY</scope>
    <scope>NOMENCLATURE</scope>
</reference>
<protein>
    <recommendedName>
        <fullName>CASP-like protein ARALYDRAFT_316979</fullName>
    </recommendedName>
</protein>
<proteinExistence type="inferred from homology"/>
<dbReference type="EMBL" id="GL348714">
    <property type="protein sequence ID" value="EFH65584.1"/>
    <property type="status" value="ALT_INIT"/>
    <property type="molecule type" value="Genomic_DNA"/>
</dbReference>
<dbReference type="RefSeq" id="XP_002889325.1">
    <property type="nucleotide sequence ID" value="XM_002889279.1"/>
</dbReference>
<dbReference type="STRING" id="81972.D7KXP8"/>
<dbReference type="eggNOG" id="ENOG502RN9B">
    <property type="taxonomic scope" value="Eukaryota"/>
</dbReference>
<dbReference type="HOGENOM" id="CLU_763664_0_0_1"/>
<dbReference type="OrthoDB" id="1918787at2759"/>
<dbReference type="Proteomes" id="UP000008694">
    <property type="component" value="Unassembled WGS sequence"/>
</dbReference>
<dbReference type="GO" id="GO:0005886">
    <property type="term" value="C:plasma membrane"/>
    <property type="evidence" value="ECO:0007669"/>
    <property type="project" value="UniProtKB-SubCell"/>
</dbReference>
<dbReference type="InterPro" id="IPR006459">
    <property type="entry name" value="CASP/CASPL"/>
</dbReference>
<dbReference type="InterPro" id="IPR006702">
    <property type="entry name" value="CASP_dom"/>
</dbReference>
<dbReference type="NCBIfam" id="TIGR01569">
    <property type="entry name" value="A_tha_TIGR01569"/>
    <property type="match status" value="1"/>
</dbReference>
<dbReference type="PANTHER" id="PTHR33573:SF39">
    <property type="entry name" value="CASP-LIKE PROTEIN 3A2"/>
    <property type="match status" value="1"/>
</dbReference>
<dbReference type="PANTHER" id="PTHR33573">
    <property type="entry name" value="CASP-LIKE PROTEIN 4A4"/>
    <property type="match status" value="1"/>
</dbReference>
<dbReference type="Pfam" id="PF04535">
    <property type="entry name" value="CASP_dom"/>
    <property type="match status" value="1"/>
</dbReference>
<keyword id="KW-1003">Cell membrane</keyword>
<keyword id="KW-0325">Glycoprotein</keyword>
<keyword id="KW-0472">Membrane</keyword>
<keyword id="KW-1185">Reference proteome</keyword>
<keyword id="KW-0812">Transmembrane</keyword>
<keyword id="KW-1133">Transmembrane helix</keyword>
<comment type="subunit">
    <text evidence="1">Homodimer and heterodimers.</text>
</comment>
<comment type="subcellular location">
    <subcellularLocation>
        <location evidence="1">Cell membrane</location>
        <topology evidence="1">Multi-pass membrane protein</topology>
    </subcellularLocation>
</comment>
<comment type="similarity">
    <text evidence="3">Belongs to the Casparian strip membrane proteins (CASP) family.</text>
</comment>
<comment type="sequence caution" evidence="3">
    <conflict type="erroneous initiation">
        <sequence resource="EMBL-CDS" id="EFH65584"/>
    </conflict>
    <text>Extended N-terminus.</text>
</comment>
<gene>
    <name type="ORF">ARALYDRAFT_316979</name>
</gene>
<evidence type="ECO:0000250" key="1"/>
<evidence type="ECO:0000255" key="2"/>
<evidence type="ECO:0000305" key="3"/>
<sequence>MRRNGDGEEVVAKRRRRIKELVQVALRGGCLAASATAMAVMLTATEEGVADIYGFKLTLSSNWSFSPSYQYVVGACTGTVLYSLFQLCLGVYRLLTGSPITPSRFQAWLCFTSDQLFGYLMMSAGSAGSGVTNLNKTGIRHTPLPDFCKTLSSFCNHVALSLLLVFLSFIFLASSSFFTVLVLSTP</sequence>
<accession>D7KXP8</accession>
<organism>
    <name type="scientific">Arabidopsis lyrata subsp. lyrata</name>
    <name type="common">Lyre-leaved rock-cress</name>
    <dbReference type="NCBI Taxonomy" id="81972"/>
    <lineage>
        <taxon>Eukaryota</taxon>
        <taxon>Viridiplantae</taxon>
        <taxon>Streptophyta</taxon>
        <taxon>Embryophyta</taxon>
        <taxon>Tracheophyta</taxon>
        <taxon>Spermatophyta</taxon>
        <taxon>Magnoliopsida</taxon>
        <taxon>eudicotyledons</taxon>
        <taxon>Gunneridae</taxon>
        <taxon>Pentapetalae</taxon>
        <taxon>rosids</taxon>
        <taxon>malvids</taxon>
        <taxon>Brassicales</taxon>
        <taxon>Brassicaceae</taxon>
        <taxon>Camelineae</taxon>
        <taxon>Arabidopsis</taxon>
    </lineage>
</organism>
<feature type="chain" id="PRO_0000422080" description="CASP-like protein ARALYDRAFT_316979">
    <location>
        <begin position="1"/>
        <end position="186"/>
    </location>
</feature>
<feature type="topological domain" description="Cytoplasmic" evidence="2">
    <location>
        <begin position="1"/>
        <end position="23"/>
    </location>
</feature>
<feature type="transmembrane region" description="Helical" evidence="2">
    <location>
        <begin position="24"/>
        <end position="44"/>
    </location>
</feature>
<feature type="topological domain" description="Extracellular" evidence="2">
    <location>
        <begin position="45"/>
        <end position="70"/>
    </location>
</feature>
<feature type="transmembrane region" description="Helical" evidence="2">
    <location>
        <begin position="71"/>
        <end position="91"/>
    </location>
</feature>
<feature type="topological domain" description="Cytoplasmic" evidence="2">
    <location>
        <begin position="92"/>
        <end position="115"/>
    </location>
</feature>
<feature type="transmembrane region" description="Helical" evidence="2">
    <location>
        <begin position="116"/>
        <end position="132"/>
    </location>
</feature>
<feature type="topological domain" description="Extracellular" evidence="2">
    <location>
        <begin position="133"/>
        <end position="161"/>
    </location>
</feature>
<feature type="transmembrane region" description="Helical" evidence="2">
    <location>
        <begin position="162"/>
        <end position="182"/>
    </location>
</feature>
<feature type="topological domain" description="Cytoplasmic" evidence="2">
    <location>
        <begin position="183"/>
        <end position="186"/>
    </location>
</feature>
<feature type="glycosylation site" description="N-linked (GlcNAc...) asparagine" evidence="2">
    <location>
        <position position="62"/>
    </location>
</feature>
<feature type="glycosylation site" description="N-linked (GlcNAc...) asparagine" evidence="2">
    <location>
        <position position="135"/>
    </location>
</feature>
<name>CSPLM_ARALL</name>